<name>GCNFA_DANRE</name>
<organism>
    <name type="scientific">Danio rerio</name>
    <name type="common">Zebrafish</name>
    <name type="synonym">Brachydanio rerio</name>
    <dbReference type="NCBI Taxonomy" id="7955"/>
    <lineage>
        <taxon>Eukaryota</taxon>
        <taxon>Metazoa</taxon>
        <taxon>Chordata</taxon>
        <taxon>Craniata</taxon>
        <taxon>Vertebrata</taxon>
        <taxon>Euteleostomi</taxon>
        <taxon>Actinopterygii</taxon>
        <taxon>Neopterygii</taxon>
        <taxon>Teleostei</taxon>
        <taxon>Ostariophysi</taxon>
        <taxon>Cypriniformes</taxon>
        <taxon>Danionidae</taxon>
        <taxon>Danioninae</taxon>
        <taxon>Danio</taxon>
    </lineage>
</organism>
<keyword id="KW-0238">DNA-binding</keyword>
<keyword id="KW-0479">Metal-binding</keyword>
<keyword id="KW-0539">Nucleus</keyword>
<keyword id="KW-0675">Receptor</keyword>
<keyword id="KW-1185">Reference proteome</keyword>
<keyword id="KW-0804">Transcription</keyword>
<keyword id="KW-0805">Transcription regulation</keyword>
<keyword id="KW-0862">Zinc</keyword>
<keyword id="KW-0863">Zinc-finger</keyword>
<protein>
    <recommendedName>
        <fullName>Nuclear receptor subfamily 6 group A member 1-A</fullName>
    </recommendedName>
    <alternativeName>
        <fullName>Germ cell nuclear factor A</fullName>
        <shortName>GCNF-A</shortName>
        <shortName>zfGCNF</shortName>
    </alternativeName>
</protein>
<evidence type="ECO:0000250" key="1"/>
<evidence type="ECO:0000250" key="2">
    <source>
        <dbReference type="UniProtKB" id="P70033"/>
    </source>
</evidence>
<evidence type="ECO:0000255" key="3"/>
<evidence type="ECO:0000255" key="4">
    <source>
        <dbReference type="PROSITE-ProRule" id="PRU00407"/>
    </source>
</evidence>
<evidence type="ECO:0000255" key="5">
    <source>
        <dbReference type="PROSITE-ProRule" id="PRU01189"/>
    </source>
</evidence>
<evidence type="ECO:0000256" key="6">
    <source>
        <dbReference type="SAM" id="MobiDB-lite"/>
    </source>
</evidence>
<evidence type="ECO:0000269" key="7">
    <source>
    </source>
</evidence>
<evidence type="ECO:0000303" key="8">
    <source>
    </source>
</evidence>
<evidence type="ECO:0000305" key="9"/>
<evidence type="ECO:0000312" key="10">
    <source>
        <dbReference type="EMBL" id="CAB58352.2"/>
    </source>
</evidence>
<evidence type="ECO:0000312" key="11">
    <source>
        <dbReference type="ZFIN" id="ZDB-GENE-991207-19"/>
    </source>
</evidence>
<accession>Q9PU65</accession>
<dbReference type="EMBL" id="AJ007703">
    <property type="protein sequence ID" value="CAB58352.2"/>
    <property type="molecule type" value="mRNA"/>
</dbReference>
<dbReference type="RefSeq" id="NP_571331.2">
    <property type="nucleotide sequence ID" value="NM_131256.2"/>
</dbReference>
<dbReference type="SMR" id="Q9PU65"/>
<dbReference type="FunCoup" id="Q9PU65">
    <property type="interactions" value="724"/>
</dbReference>
<dbReference type="STRING" id="7955.ENSDARP00000150789"/>
<dbReference type="PaxDb" id="7955-ENSDARP00000105986"/>
<dbReference type="GeneID" id="30506"/>
<dbReference type="KEGG" id="dre:30506"/>
<dbReference type="AGR" id="ZFIN:ZDB-GENE-991207-19"/>
<dbReference type="CTD" id="30506"/>
<dbReference type="ZFIN" id="ZDB-GENE-991207-19">
    <property type="gene designation" value="nr6a1a"/>
</dbReference>
<dbReference type="eggNOG" id="KOG3575">
    <property type="taxonomic scope" value="Eukaryota"/>
</dbReference>
<dbReference type="InParanoid" id="Q9PU65"/>
<dbReference type="OrthoDB" id="10006908at2759"/>
<dbReference type="PhylomeDB" id="Q9PU65"/>
<dbReference type="PRO" id="PR:Q9PU65"/>
<dbReference type="Proteomes" id="UP000000437">
    <property type="component" value="Chromosome 8"/>
</dbReference>
<dbReference type="GO" id="GO:0000785">
    <property type="term" value="C:chromatin"/>
    <property type="evidence" value="ECO:0000318"/>
    <property type="project" value="GO_Central"/>
</dbReference>
<dbReference type="GO" id="GO:0005737">
    <property type="term" value="C:cytoplasm"/>
    <property type="evidence" value="ECO:0000250"/>
    <property type="project" value="UniProtKB"/>
</dbReference>
<dbReference type="GO" id="GO:0005634">
    <property type="term" value="C:nucleus"/>
    <property type="evidence" value="ECO:0000250"/>
    <property type="project" value="UniProtKB"/>
</dbReference>
<dbReference type="GO" id="GO:0034056">
    <property type="term" value="F:estrogen response element binding"/>
    <property type="evidence" value="ECO:0000318"/>
    <property type="project" value="GO_Central"/>
</dbReference>
<dbReference type="GO" id="GO:0042562">
    <property type="term" value="F:hormone binding"/>
    <property type="evidence" value="ECO:0007669"/>
    <property type="project" value="UniProtKB-ARBA"/>
</dbReference>
<dbReference type="GO" id="GO:0004879">
    <property type="term" value="F:nuclear receptor activity"/>
    <property type="evidence" value="ECO:0000318"/>
    <property type="project" value="GO_Central"/>
</dbReference>
<dbReference type="GO" id="GO:0042803">
    <property type="term" value="F:protein homodimerization activity"/>
    <property type="evidence" value="ECO:0000250"/>
    <property type="project" value="UniProtKB"/>
</dbReference>
<dbReference type="GO" id="GO:0043565">
    <property type="term" value="F:sequence-specific DNA binding"/>
    <property type="evidence" value="ECO:0000250"/>
    <property type="project" value="UniProtKB"/>
</dbReference>
<dbReference type="GO" id="GO:0008270">
    <property type="term" value="F:zinc ion binding"/>
    <property type="evidence" value="ECO:0007669"/>
    <property type="project" value="UniProtKB-KW"/>
</dbReference>
<dbReference type="GO" id="GO:0048513">
    <property type="term" value="P:animal organ development"/>
    <property type="evidence" value="ECO:0000250"/>
    <property type="project" value="UniProtKB"/>
</dbReference>
<dbReference type="GO" id="GO:0009952">
    <property type="term" value="P:anterior/posterior pattern specification"/>
    <property type="evidence" value="ECO:0000250"/>
    <property type="project" value="UniProtKB"/>
</dbReference>
<dbReference type="GO" id="GO:0016477">
    <property type="term" value="P:cell migration"/>
    <property type="evidence" value="ECO:0000250"/>
    <property type="project" value="UniProtKB"/>
</dbReference>
<dbReference type="GO" id="GO:0030917">
    <property type="term" value="P:midbrain-hindbrain boundary development"/>
    <property type="evidence" value="ECO:0000250"/>
    <property type="project" value="UniProtKB"/>
</dbReference>
<dbReference type="GO" id="GO:0022008">
    <property type="term" value="P:neurogenesis"/>
    <property type="evidence" value="ECO:0000250"/>
    <property type="project" value="UniProtKB"/>
</dbReference>
<dbReference type="GO" id="GO:0006357">
    <property type="term" value="P:regulation of transcription by RNA polymerase II"/>
    <property type="evidence" value="ECO:0000318"/>
    <property type="project" value="GO_Central"/>
</dbReference>
<dbReference type="GO" id="GO:0033993">
    <property type="term" value="P:response to lipid"/>
    <property type="evidence" value="ECO:0007669"/>
    <property type="project" value="UniProtKB-ARBA"/>
</dbReference>
<dbReference type="CDD" id="cd07169">
    <property type="entry name" value="NR_DBD_GCNF_like"/>
    <property type="match status" value="1"/>
</dbReference>
<dbReference type="CDD" id="cd06953">
    <property type="entry name" value="NR_LBD_DHR4_like"/>
    <property type="match status" value="1"/>
</dbReference>
<dbReference type="FunFam" id="3.30.50.10:FF:000006">
    <property type="entry name" value="Nuclear receptor subfamily 5 group A member"/>
    <property type="match status" value="1"/>
</dbReference>
<dbReference type="FunFam" id="1.10.565.10:FF:000015">
    <property type="entry name" value="Nuclear receptor subfamily 6 group A member 1"/>
    <property type="match status" value="1"/>
</dbReference>
<dbReference type="Gene3D" id="3.30.50.10">
    <property type="entry name" value="Erythroid Transcription Factor GATA-1, subunit A"/>
    <property type="match status" value="1"/>
</dbReference>
<dbReference type="Gene3D" id="1.10.565.10">
    <property type="entry name" value="Retinoid X Receptor"/>
    <property type="match status" value="1"/>
</dbReference>
<dbReference type="InterPro" id="IPR035500">
    <property type="entry name" value="NHR-like_dom_sf"/>
</dbReference>
<dbReference type="InterPro" id="IPR000536">
    <property type="entry name" value="Nucl_hrmn_rcpt_lig-bd"/>
</dbReference>
<dbReference type="InterPro" id="IPR050200">
    <property type="entry name" value="Nuclear_hormone_rcpt_NR3"/>
</dbReference>
<dbReference type="InterPro" id="IPR001723">
    <property type="entry name" value="Nuclear_hrmn_rcpt"/>
</dbReference>
<dbReference type="InterPro" id="IPR001628">
    <property type="entry name" value="Znf_hrmn_rcpt"/>
</dbReference>
<dbReference type="InterPro" id="IPR013088">
    <property type="entry name" value="Znf_NHR/GATA"/>
</dbReference>
<dbReference type="PANTHER" id="PTHR48092">
    <property type="entry name" value="KNIRPS-RELATED PROTEIN-RELATED"/>
    <property type="match status" value="1"/>
</dbReference>
<dbReference type="Pfam" id="PF00104">
    <property type="entry name" value="Hormone_recep"/>
    <property type="match status" value="1"/>
</dbReference>
<dbReference type="Pfam" id="PF00105">
    <property type="entry name" value="zf-C4"/>
    <property type="match status" value="1"/>
</dbReference>
<dbReference type="PRINTS" id="PR00398">
    <property type="entry name" value="STRDHORMONER"/>
</dbReference>
<dbReference type="PRINTS" id="PR00047">
    <property type="entry name" value="STROIDFINGER"/>
</dbReference>
<dbReference type="SMART" id="SM00430">
    <property type="entry name" value="HOLI"/>
    <property type="match status" value="1"/>
</dbReference>
<dbReference type="SMART" id="SM00399">
    <property type="entry name" value="ZnF_C4"/>
    <property type="match status" value="1"/>
</dbReference>
<dbReference type="SUPFAM" id="SSF57716">
    <property type="entry name" value="Glucocorticoid receptor-like (DNA-binding domain)"/>
    <property type="match status" value="1"/>
</dbReference>
<dbReference type="SUPFAM" id="SSF48508">
    <property type="entry name" value="Nuclear receptor ligand-binding domain"/>
    <property type="match status" value="1"/>
</dbReference>
<dbReference type="PROSITE" id="PS51843">
    <property type="entry name" value="NR_LBD"/>
    <property type="match status" value="1"/>
</dbReference>
<dbReference type="PROSITE" id="PS00031">
    <property type="entry name" value="NUCLEAR_REC_DBD_1"/>
    <property type="match status" value="1"/>
</dbReference>
<dbReference type="PROSITE" id="PS51030">
    <property type="entry name" value="NUCLEAR_REC_DBD_2"/>
    <property type="match status" value="1"/>
</dbReference>
<feature type="chain" id="PRO_0000292604" description="Nuclear receptor subfamily 6 group A member 1-A">
    <location>
        <begin position="1"/>
        <end position="477"/>
    </location>
</feature>
<feature type="domain" description="NR LBD" evidence="5">
    <location>
        <begin position="230"/>
        <end position="461"/>
    </location>
</feature>
<feature type="DNA-binding region" description="Nuclear receptor" evidence="4">
    <location>
        <begin position="40"/>
        <end position="115"/>
    </location>
</feature>
<feature type="zinc finger region" description="NR C4-type" evidence="4">
    <location>
        <begin position="43"/>
        <end position="63"/>
    </location>
</feature>
<feature type="zinc finger region" description="NR C4-type" evidence="4">
    <location>
        <begin position="79"/>
        <end position="98"/>
    </location>
</feature>
<feature type="region of interest" description="Disordered" evidence="6">
    <location>
        <begin position="147"/>
        <end position="187"/>
    </location>
</feature>
<feature type="compositionally biased region" description="Polar residues" evidence="6">
    <location>
        <begin position="156"/>
        <end position="187"/>
    </location>
</feature>
<comment type="function">
    <text evidence="1">Probable orphan nuclear receptor. Binds to a response element containing repeats of the motif 5'-AGGTCA-3' (By similarity).</text>
</comment>
<comment type="subunit">
    <text evidence="2">Homodimer.</text>
</comment>
<comment type="subcellular location">
    <subcellularLocation>
        <location evidence="9">Nucleus</location>
    </subcellularLocation>
</comment>
<comment type="tissue specificity">
    <text evidence="7">Expressed in germ cells, being predominant in previtellogenic oocytes in the ovary and in spermatocytes in the testis.</text>
</comment>
<comment type="similarity">
    <text evidence="3">Belongs to the nuclear hormone receptor family. NR6 subfamily.</text>
</comment>
<proteinExistence type="evidence at transcript level"/>
<reference evidence="9 10" key="1">
    <citation type="journal article" date="1999" name="Mol. Reprod. Dev.">
        <title>Cloning and expression of the zebrafish germ cell nuclear factor.</title>
        <authorList>
            <person name="Braat A.K."/>
            <person name="Zandbergen M.A."/>
            <person name="De Vries E."/>
            <person name="Van Der Burg B."/>
            <person name="Bogerd J."/>
            <person name="Goos H.J.T."/>
        </authorList>
    </citation>
    <scope>NUCLEOTIDE SEQUENCE [MRNA]</scope>
    <scope>TISSUE SPECIFICITY</scope>
    <source>
        <tissue evidence="10">Testis</tissue>
    </source>
</reference>
<reference evidence="9 10" key="2">
    <citation type="submission" date="2006-12" db="EMBL/GenBank/DDBJ databases">
        <authorList>
            <person name="Bogerd J."/>
        </authorList>
    </citation>
    <scope>SEQUENCE REVISION TO N-TERMINUS; 235 AND 236</scope>
</reference>
<gene>
    <name evidence="11" type="primary">nr6a1a</name>
    <name evidence="8" type="synonym">gcnf</name>
</gene>
<sequence>MVDKTHETEFSKKQLEASSSGHGGVLIDAEENGIHDQAEQRSCLICGDRATGLHYGIISCEGCKGFFKRSICNKRVYRCSRDKNCEMSRKQRNRCQYCRLLKCLQMGMNRKAIREDGMPGGRNKSIGPVQISDEEIERIMSGQEFKDEANMPEHTWGNNGDSDHSSPGNGVSDGNQPSPVSTLSSNRSVELNGYTTALREQYIGNAMAQHYQFLPHLFGYAAQPRSLYPQSHTLIGQLVAAEDLAPLGTPMLIEDGYRVTQVELFALLCRLADELLFRQISWIKKLPFFCDLSIEDYTRLLSATWQELILLACLTVYSAQVLGDLANVTHKYTPSDDELHSFSEDGMEVMEKLIYLFRKFHQLKVSNEEYACMKAINFLNQDIRGLTNVTQLEQLNKRYWYVCQDYTEYKYPHQPKRFPEIMMCLPEIRCIAGKLVNIPLEQLPLLFKAVLHSCKSSLSSYRTSSSPCVTKGTAPAN</sequence>